<keyword id="KW-0312">Gluconeogenesis</keyword>
<keyword id="KW-0324">Glycolysis</keyword>
<keyword id="KW-0413">Isomerase</keyword>
<evidence type="ECO:0000255" key="1">
    <source>
        <dbReference type="HAMAP-Rule" id="MF_01039"/>
    </source>
</evidence>
<sequence length="250" mass="28597">MYKLVLVRHGESKWNKENLFTGWTDVKLSEKGVSEACEGGRILKEEGYSFDIAFSSMLVRANDTLNIILCELGQSYIDVEKSWRLNERHYGALQGLNKAETAEKYGEDKVLIWRRSYNVPPMPLDESDKRHPIHDSRYKNIPKSELPSTECLKDTVARVIPYWTDKIAKAILEGKRVIVAAHGNSLRALVKYLDNMSEEDILKLNIPTGIPLVYELDKNLKPVKHYYLGDEDKIKAAMESVANQGKKIDR</sequence>
<name>GPMA_BORRA</name>
<proteinExistence type="inferred from homology"/>
<accession>B5RQ00</accession>
<dbReference type="EC" id="5.4.2.11" evidence="1"/>
<dbReference type="EMBL" id="CP000993">
    <property type="protein sequence ID" value="ACH94884.1"/>
    <property type="molecule type" value="Genomic_DNA"/>
</dbReference>
<dbReference type="RefSeq" id="WP_012539068.1">
    <property type="nucleotide sequence ID" value="NC_011244.1"/>
</dbReference>
<dbReference type="SMR" id="B5RQ00"/>
<dbReference type="KEGG" id="bre:BRE_664"/>
<dbReference type="HOGENOM" id="CLU_033323_1_1_12"/>
<dbReference type="UniPathway" id="UPA00109">
    <property type="reaction ID" value="UER00186"/>
</dbReference>
<dbReference type="Proteomes" id="UP000000612">
    <property type="component" value="Chromosome"/>
</dbReference>
<dbReference type="GO" id="GO:0004619">
    <property type="term" value="F:phosphoglycerate mutase activity"/>
    <property type="evidence" value="ECO:0007669"/>
    <property type="project" value="UniProtKB-EC"/>
</dbReference>
<dbReference type="GO" id="GO:0006094">
    <property type="term" value="P:gluconeogenesis"/>
    <property type="evidence" value="ECO:0007669"/>
    <property type="project" value="UniProtKB-UniRule"/>
</dbReference>
<dbReference type="GO" id="GO:0006096">
    <property type="term" value="P:glycolytic process"/>
    <property type="evidence" value="ECO:0007669"/>
    <property type="project" value="UniProtKB-UniRule"/>
</dbReference>
<dbReference type="CDD" id="cd07067">
    <property type="entry name" value="HP_PGM_like"/>
    <property type="match status" value="1"/>
</dbReference>
<dbReference type="FunFam" id="3.40.50.1240:FF:000003">
    <property type="entry name" value="2,3-bisphosphoglycerate-dependent phosphoglycerate mutase"/>
    <property type="match status" value="1"/>
</dbReference>
<dbReference type="Gene3D" id="3.40.50.1240">
    <property type="entry name" value="Phosphoglycerate mutase-like"/>
    <property type="match status" value="1"/>
</dbReference>
<dbReference type="HAMAP" id="MF_01039">
    <property type="entry name" value="PGAM_GpmA"/>
    <property type="match status" value="1"/>
</dbReference>
<dbReference type="InterPro" id="IPR013078">
    <property type="entry name" value="His_Pase_superF_clade-1"/>
</dbReference>
<dbReference type="InterPro" id="IPR029033">
    <property type="entry name" value="His_PPase_superfam"/>
</dbReference>
<dbReference type="InterPro" id="IPR001345">
    <property type="entry name" value="PG/BPGM_mutase_AS"/>
</dbReference>
<dbReference type="InterPro" id="IPR005952">
    <property type="entry name" value="Phosphogly_mut1"/>
</dbReference>
<dbReference type="NCBIfam" id="TIGR01258">
    <property type="entry name" value="pgm_1"/>
    <property type="match status" value="1"/>
</dbReference>
<dbReference type="NCBIfam" id="NF010713">
    <property type="entry name" value="PRK14115.1"/>
    <property type="match status" value="1"/>
</dbReference>
<dbReference type="PANTHER" id="PTHR11931">
    <property type="entry name" value="PHOSPHOGLYCERATE MUTASE"/>
    <property type="match status" value="1"/>
</dbReference>
<dbReference type="Pfam" id="PF00300">
    <property type="entry name" value="His_Phos_1"/>
    <property type="match status" value="2"/>
</dbReference>
<dbReference type="PIRSF" id="PIRSF000709">
    <property type="entry name" value="6PFK_2-Ptase"/>
    <property type="match status" value="1"/>
</dbReference>
<dbReference type="SMART" id="SM00855">
    <property type="entry name" value="PGAM"/>
    <property type="match status" value="1"/>
</dbReference>
<dbReference type="SUPFAM" id="SSF53254">
    <property type="entry name" value="Phosphoglycerate mutase-like"/>
    <property type="match status" value="1"/>
</dbReference>
<dbReference type="PROSITE" id="PS00175">
    <property type="entry name" value="PG_MUTASE"/>
    <property type="match status" value="1"/>
</dbReference>
<organism>
    <name type="scientific">Borrelia recurrentis (strain A1)</name>
    <dbReference type="NCBI Taxonomy" id="412418"/>
    <lineage>
        <taxon>Bacteria</taxon>
        <taxon>Pseudomonadati</taxon>
        <taxon>Spirochaetota</taxon>
        <taxon>Spirochaetia</taxon>
        <taxon>Spirochaetales</taxon>
        <taxon>Borreliaceae</taxon>
        <taxon>Borrelia</taxon>
    </lineage>
</organism>
<feature type="chain" id="PRO_1000135925" description="2,3-bisphosphoglycerate-dependent phosphoglycerate mutase">
    <location>
        <begin position="1"/>
        <end position="250"/>
    </location>
</feature>
<feature type="active site" description="Tele-phosphohistidine intermediate" evidence="1">
    <location>
        <position position="9"/>
    </location>
</feature>
<feature type="active site" description="Proton donor/acceptor" evidence="1">
    <location>
        <position position="87"/>
    </location>
</feature>
<feature type="binding site" evidence="1">
    <location>
        <begin position="8"/>
        <end position="15"/>
    </location>
    <ligand>
        <name>substrate</name>
    </ligand>
</feature>
<feature type="binding site" evidence="1">
    <location>
        <begin position="21"/>
        <end position="22"/>
    </location>
    <ligand>
        <name>substrate</name>
    </ligand>
</feature>
<feature type="binding site" evidence="1">
    <location>
        <position position="60"/>
    </location>
    <ligand>
        <name>substrate</name>
    </ligand>
</feature>
<feature type="binding site" evidence="1">
    <location>
        <begin position="87"/>
        <end position="90"/>
    </location>
    <ligand>
        <name>substrate</name>
    </ligand>
</feature>
<feature type="binding site" evidence="1">
    <location>
        <position position="98"/>
    </location>
    <ligand>
        <name>substrate</name>
    </ligand>
</feature>
<feature type="binding site" evidence="1">
    <location>
        <begin position="114"/>
        <end position="115"/>
    </location>
    <ligand>
        <name>substrate</name>
    </ligand>
</feature>
<feature type="binding site" evidence="1">
    <location>
        <begin position="183"/>
        <end position="184"/>
    </location>
    <ligand>
        <name>substrate</name>
    </ligand>
</feature>
<feature type="site" description="Transition state stabilizer" evidence="1">
    <location>
        <position position="182"/>
    </location>
</feature>
<reference key="1">
    <citation type="journal article" date="2008" name="PLoS Genet.">
        <title>The genome of Borrelia recurrentis, the agent of deadly louse-borne relapsing fever, is a degraded subset of tick-borne Borrelia duttonii.</title>
        <authorList>
            <person name="Lescot M."/>
            <person name="Audic S."/>
            <person name="Robert C."/>
            <person name="Nguyen T.T."/>
            <person name="Blanc G."/>
            <person name="Cutler S.J."/>
            <person name="Wincker P."/>
            <person name="Couloux A."/>
            <person name="Claverie J.-M."/>
            <person name="Raoult D."/>
            <person name="Drancourt M."/>
        </authorList>
    </citation>
    <scope>NUCLEOTIDE SEQUENCE [LARGE SCALE GENOMIC DNA]</scope>
    <source>
        <strain>A1</strain>
    </source>
</reference>
<gene>
    <name evidence="1" type="primary">gpmA</name>
    <name type="ordered locus">BRE_664</name>
</gene>
<protein>
    <recommendedName>
        <fullName evidence="1">2,3-bisphosphoglycerate-dependent phosphoglycerate mutase</fullName>
        <shortName evidence="1">BPG-dependent PGAM</shortName>
        <shortName evidence="1">PGAM</shortName>
        <shortName evidence="1">Phosphoglyceromutase</shortName>
        <shortName evidence="1">dPGM</shortName>
        <ecNumber evidence="1">5.4.2.11</ecNumber>
    </recommendedName>
</protein>
<comment type="function">
    <text evidence="1">Catalyzes the interconversion of 2-phosphoglycerate and 3-phosphoglycerate.</text>
</comment>
<comment type="catalytic activity">
    <reaction evidence="1">
        <text>(2R)-2-phosphoglycerate = (2R)-3-phosphoglycerate</text>
        <dbReference type="Rhea" id="RHEA:15901"/>
        <dbReference type="ChEBI" id="CHEBI:58272"/>
        <dbReference type="ChEBI" id="CHEBI:58289"/>
        <dbReference type="EC" id="5.4.2.11"/>
    </reaction>
</comment>
<comment type="pathway">
    <text evidence="1">Carbohydrate degradation; glycolysis; pyruvate from D-glyceraldehyde 3-phosphate: step 3/5.</text>
</comment>
<comment type="similarity">
    <text evidence="1">Belongs to the phosphoglycerate mutase family. BPG-dependent PGAM subfamily.</text>
</comment>